<accession>B4P528</accession>
<reference key="1">
    <citation type="journal article" date="2007" name="Nature">
        <title>Evolution of genes and genomes on the Drosophila phylogeny.</title>
        <authorList>
            <consortium name="Drosophila 12 genomes consortium"/>
        </authorList>
    </citation>
    <scope>NUCLEOTIDE SEQUENCE [LARGE SCALE GENOMIC DNA]</scope>
    <source>
        <strain>Tai18E2 / Tucson 14021-0261.01</strain>
    </source>
</reference>
<keyword id="KW-0539">Nucleus</keyword>
<keyword id="KW-0677">Repeat</keyword>
<keyword id="KW-0690">Ribosome biogenesis</keyword>
<keyword id="KW-0698">rRNA processing</keyword>
<keyword id="KW-0853">WD repeat</keyword>
<evidence type="ECO:0000255" key="1">
    <source>
        <dbReference type="HAMAP-Rule" id="MF_03027"/>
    </source>
</evidence>
<evidence type="ECO:0000256" key="2">
    <source>
        <dbReference type="SAM" id="MobiDB-lite"/>
    </source>
</evidence>
<dbReference type="EMBL" id="CM000158">
    <property type="protein sequence ID" value="EDW91729.1"/>
    <property type="molecule type" value="Genomic_DNA"/>
</dbReference>
<dbReference type="SMR" id="B4P528"/>
<dbReference type="EnsemblMetazoa" id="FBtr0258419">
    <property type="protein sequence ID" value="FBpp0256911"/>
    <property type="gene ID" value="FBgn0229685"/>
</dbReference>
<dbReference type="EnsemblMetazoa" id="XM_002091981.4">
    <property type="protein sequence ID" value="XP_002092017.1"/>
    <property type="gene ID" value="LOC6531188"/>
</dbReference>
<dbReference type="GeneID" id="6531188"/>
<dbReference type="KEGG" id="dya:Dyak_GE11901"/>
<dbReference type="eggNOG" id="KOG0650">
    <property type="taxonomic scope" value="Eukaryota"/>
</dbReference>
<dbReference type="HOGENOM" id="CLU_011390_2_0_1"/>
<dbReference type="OMA" id="MRPAKGE"/>
<dbReference type="OrthoDB" id="5571054at2759"/>
<dbReference type="PhylomeDB" id="B4P528"/>
<dbReference type="Proteomes" id="UP000002282">
    <property type="component" value="Chromosome 2R"/>
</dbReference>
<dbReference type="GO" id="GO:0005654">
    <property type="term" value="C:nucleoplasm"/>
    <property type="evidence" value="ECO:0007669"/>
    <property type="project" value="UniProtKB-SubCell"/>
</dbReference>
<dbReference type="GO" id="GO:0070545">
    <property type="term" value="C:PeBoW complex"/>
    <property type="evidence" value="ECO:0007669"/>
    <property type="project" value="TreeGrafter"/>
</dbReference>
<dbReference type="GO" id="GO:0030687">
    <property type="term" value="C:preribosome, large subunit precursor"/>
    <property type="evidence" value="ECO:0007669"/>
    <property type="project" value="UniProtKB-UniRule"/>
</dbReference>
<dbReference type="GO" id="GO:0043021">
    <property type="term" value="F:ribonucleoprotein complex binding"/>
    <property type="evidence" value="ECO:0007669"/>
    <property type="project" value="UniProtKB-UniRule"/>
</dbReference>
<dbReference type="GO" id="GO:0000466">
    <property type="term" value="P:maturation of 5.8S rRNA from tricistronic rRNA transcript (SSU-rRNA, 5.8S rRNA, LSU-rRNA)"/>
    <property type="evidence" value="ECO:0007669"/>
    <property type="project" value="UniProtKB-UniRule"/>
</dbReference>
<dbReference type="GO" id="GO:0000463">
    <property type="term" value="P:maturation of LSU-rRNA from tricistronic rRNA transcript (SSU-rRNA, 5.8S rRNA, LSU-rRNA)"/>
    <property type="evidence" value="ECO:0007669"/>
    <property type="project" value="UniProtKB-UniRule"/>
</dbReference>
<dbReference type="GO" id="GO:0035206">
    <property type="term" value="P:regulation of hemocyte proliferation"/>
    <property type="evidence" value="ECO:0007669"/>
    <property type="project" value="EnsemblMetazoa"/>
</dbReference>
<dbReference type="CDD" id="cd00200">
    <property type="entry name" value="WD40"/>
    <property type="match status" value="1"/>
</dbReference>
<dbReference type="FunFam" id="2.130.10.10:FF:000061">
    <property type="entry name" value="Ribosome biogenesis protein BOP1 homolog"/>
    <property type="match status" value="1"/>
</dbReference>
<dbReference type="Gene3D" id="2.130.10.10">
    <property type="entry name" value="YVTN repeat-like/Quinoprotein amine dehydrogenase"/>
    <property type="match status" value="1"/>
</dbReference>
<dbReference type="HAMAP" id="MF_03027">
    <property type="entry name" value="BOP1"/>
    <property type="match status" value="1"/>
</dbReference>
<dbReference type="InterPro" id="IPR028598">
    <property type="entry name" value="BOP1/Erb1"/>
</dbReference>
<dbReference type="InterPro" id="IPR012953">
    <property type="entry name" value="BOP1_N_dom"/>
</dbReference>
<dbReference type="InterPro" id="IPR015943">
    <property type="entry name" value="WD40/YVTN_repeat-like_dom_sf"/>
</dbReference>
<dbReference type="InterPro" id="IPR019775">
    <property type="entry name" value="WD40_repeat_CS"/>
</dbReference>
<dbReference type="InterPro" id="IPR036322">
    <property type="entry name" value="WD40_repeat_dom_sf"/>
</dbReference>
<dbReference type="InterPro" id="IPR001680">
    <property type="entry name" value="WD40_rpt"/>
</dbReference>
<dbReference type="PANTHER" id="PTHR17605:SF0">
    <property type="entry name" value="RIBOSOME BIOGENESIS PROTEIN BOP1"/>
    <property type="match status" value="1"/>
</dbReference>
<dbReference type="PANTHER" id="PTHR17605">
    <property type="entry name" value="RIBOSOME BIOGENESIS PROTEIN BOP1 BLOCK OF PROLIFERATION 1 PROTEIN"/>
    <property type="match status" value="1"/>
</dbReference>
<dbReference type="Pfam" id="PF08145">
    <property type="entry name" value="BOP1NT"/>
    <property type="match status" value="1"/>
</dbReference>
<dbReference type="Pfam" id="PF00400">
    <property type="entry name" value="WD40"/>
    <property type="match status" value="3"/>
</dbReference>
<dbReference type="SMART" id="SM01035">
    <property type="entry name" value="BOP1NT"/>
    <property type="match status" value="1"/>
</dbReference>
<dbReference type="SMART" id="SM00320">
    <property type="entry name" value="WD40"/>
    <property type="match status" value="7"/>
</dbReference>
<dbReference type="SUPFAM" id="SSF50978">
    <property type="entry name" value="WD40 repeat-like"/>
    <property type="match status" value="1"/>
</dbReference>
<dbReference type="PROSITE" id="PS00678">
    <property type="entry name" value="WD_REPEATS_1"/>
    <property type="match status" value="1"/>
</dbReference>
<dbReference type="PROSITE" id="PS50082">
    <property type="entry name" value="WD_REPEATS_2"/>
    <property type="match status" value="1"/>
</dbReference>
<dbReference type="PROSITE" id="PS50294">
    <property type="entry name" value="WD_REPEATS_REGION"/>
    <property type="match status" value="2"/>
</dbReference>
<proteinExistence type="inferred from homology"/>
<comment type="function">
    <text evidence="1">Required for maturation of ribosomal RNAs and formation of the large ribosomal subunit.</text>
</comment>
<comment type="subcellular location">
    <subcellularLocation>
        <location evidence="1">Nucleus</location>
        <location evidence="1">Nucleolus</location>
    </subcellularLocation>
    <subcellularLocation>
        <location evidence="1">Nucleus</location>
        <location evidence="1">Nucleoplasm</location>
    </subcellularLocation>
</comment>
<comment type="similarity">
    <text evidence="1">Belongs to the WD repeat BOP1/ERB1 family.</text>
</comment>
<protein>
    <recommendedName>
        <fullName evidence="1">Ribosome biogenesis protein BOP1 homolog</fullName>
    </recommendedName>
</protein>
<sequence>MTKKLALKRKGKDAEPTNEVVASSEASENEEEEEDLLQAVKDPGEDSTDDEGIDQEYHSDSSEELQFESDEEGNYLGRKQSSSAEEDEESSDEDDDEEEGSSDEEGEEDEEKDSKSKQADDKPSSSGAASKKAPTTELSKRDTSKPEYQDSDTSDEEDIRNTVGNIPMHWYDEYKHIGYDWDAKKIIKPPQGDQIDEFLRKIEDPDFWRTVKDPLTGQDVRLTDEDIALIKRIVSGRIPNKDHEEYEPWIEWFTSEVEKMPIKNVPDHKRSFLPSVSEKKRVSRMVHALKMGWMKTTEEVEREKQAKRGPKFYMLWETDTSREHMRRIHDPVSAPKRDLPGHAESYNPPPEYLFDAKETKEWLKLKDEPHKRKLHFMPQKFKSLREVPAYSRYLRERFLRCLDLYLCPRAKRVKLNIDAEYLIPKLPSPRDLQPFPTVESMVYRGHTDLVRSVSVEPKGEYLVSGSDDKTVKIWEIATGRCIRTIETDEVVRCVAWCPNPKLSIIAVATGNRLLLVNPKVGDKVLVKKTDDLLAEAPSQDVIESERIKTAVQWSNAEADEQEKGVRVVITHFKPIRQVTWHGRGDYLATVMPEGANRSALIHQLSKRRSQIPFSKSKGLIQFVLFHPVKPCFFVATQHNIRIYDLVKQELVKKLLTNSKWISGMSIHPKGDNLLVSTYDKKMLWFDLDLSTKPYQTMRLHRNAVRSVAFHLRYPLFASGSDDQAVIVSHGMVYNDLLQNPLIVPLKKLQTHEKRDEFGVLDVNWHPVQPWIFSTGADSTIRLYT</sequence>
<organism>
    <name type="scientific">Drosophila yakuba</name>
    <name type="common">Fruit fly</name>
    <dbReference type="NCBI Taxonomy" id="7245"/>
    <lineage>
        <taxon>Eukaryota</taxon>
        <taxon>Metazoa</taxon>
        <taxon>Ecdysozoa</taxon>
        <taxon>Arthropoda</taxon>
        <taxon>Hexapoda</taxon>
        <taxon>Insecta</taxon>
        <taxon>Pterygota</taxon>
        <taxon>Neoptera</taxon>
        <taxon>Endopterygota</taxon>
        <taxon>Diptera</taxon>
        <taxon>Brachycera</taxon>
        <taxon>Muscomorpha</taxon>
        <taxon>Ephydroidea</taxon>
        <taxon>Drosophilidae</taxon>
        <taxon>Drosophila</taxon>
        <taxon>Sophophora</taxon>
    </lineage>
</organism>
<name>BOP1_DROYA</name>
<feature type="chain" id="PRO_0000370404" description="Ribosome biogenesis protein BOP1 homolog">
    <location>
        <begin position="1"/>
        <end position="784"/>
    </location>
</feature>
<feature type="repeat" description="WD 1">
    <location>
        <begin position="445"/>
        <end position="486"/>
    </location>
</feature>
<feature type="repeat" description="WD 2">
    <location>
        <begin position="488"/>
        <end position="526"/>
    </location>
</feature>
<feature type="repeat" description="WD 3">
    <location>
        <begin position="570"/>
        <end position="612"/>
    </location>
</feature>
<feature type="repeat" description="WD 4">
    <location>
        <begin position="615"/>
        <end position="653"/>
    </location>
</feature>
<feature type="repeat" description="WD 5">
    <location>
        <begin position="656"/>
        <end position="695"/>
    </location>
</feature>
<feature type="repeat" description="WD 6">
    <location>
        <begin position="699"/>
        <end position="738"/>
    </location>
</feature>
<feature type="repeat" description="WD 7">
    <location>
        <begin position="754"/>
        <end position="784"/>
    </location>
</feature>
<feature type="region of interest" description="Disordered" evidence="2">
    <location>
        <begin position="1"/>
        <end position="159"/>
    </location>
</feature>
<feature type="compositionally biased region" description="Basic residues" evidence="2">
    <location>
        <begin position="1"/>
        <end position="11"/>
    </location>
</feature>
<feature type="compositionally biased region" description="Acidic residues" evidence="2">
    <location>
        <begin position="27"/>
        <end position="36"/>
    </location>
</feature>
<feature type="compositionally biased region" description="Acidic residues" evidence="2">
    <location>
        <begin position="45"/>
        <end position="54"/>
    </location>
</feature>
<feature type="compositionally biased region" description="Acidic residues" evidence="2">
    <location>
        <begin position="62"/>
        <end position="73"/>
    </location>
</feature>
<feature type="compositionally biased region" description="Acidic residues" evidence="2">
    <location>
        <begin position="84"/>
        <end position="111"/>
    </location>
</feature>
<feature type="compositionally biased region" description="Basic and acidic residues" evidence="2">
    <location>
        <begin position="112"/>
        <end position="123"/>
    </location>
</feature>
<feature type="compositionally biased region" description="Low complexity" evidence="2">
    <location>
        <begin position="124"/>
        <end position="133"/>
    </location>
</feature>
<feature type="compositionally biased region" description="Basic and acidic residues" evidence="2">
    <location>
        <begin position="138"/>
        <end position="148"/>
    </location>
</feature>
<feature type="compositionally biased region" description="Acidic residues" evidence="2">
    <location>
        <begin position="149"/>
        <end position="158"/>
    </location>
</feature>
<gene>
    <name type="ORF">GE11901</name>
</gene>